<protein>
    <recommendedName>
        <fullName evidence="1">Isoleucine--tRNA ligase</fullName>
        <ecNumber evidence="1">6.1.1.5</ecNumber>
    </recommendedName>
    <alternativeName>
        <fullName evidence="1">Isoleucyl-tRNA synthetase</fullName>
        <shortName evidence="1">IleRS</shortName>
    </alternativeName>
</protein>
<gene>
    <name evidence="1" type="primary">ileS</name>
    <name type="ordered locus">CPn_0109</name>
    <name type="ordered locus">CP_0665</name>
    <name type="ordered locus">CpB0110</name>
</gene>
<proteinExistence type="inferred from homology"/>
<feature type="chain" id="PRO_0000098528" description="Isoleucine--tRNA ligase">
    <location>
        <begin position="1"/>
        <end position="1043"/>
    </location>
</feature>
<feature type="short sequence motif" description="'HIGH' region">
    <location>
        <begin position="48"/>
        <end position="58"/>
    </location>
</feature>
<feature type="short sequence motif" description="'KMSKS' region">
    <location>
        <begin position="591"/>
        <end position="595"/>
    </location>
</feature>
<feature type="binding site" evidence="1">
    <location>
        <position position="594"/>
    </location>
    <ligand>
        <name>ATP</name>
        <dbReference type="ChEBI" id="CHEBI:30616"/>
    </ligand>
</feature>
<feature type="sequence conflict" description="In Ref. 2; AAF38477." evidence="2" ref="2">
    <original>H</original>
    <variation>Y</variation>
    <location>
        <position position="384"/>
    </location>
</feature>
<feature type="sequence conflict" description="In Ref. 4; AAP98043." evidence="2" ref="4">
    <original>R</original>
    <variation>H</variation>
    <location>
        <position position="798"/>
    </location>
</feature>
<evidence type="ECO:0000255" key="1">
    <source>
        <dbReference type="HAMAP-Rule" id="MF_02003"/>
    </source>
</evidence>
<evidence type="ECO:0000305" key="2"/>
<accession>Q9Z972</accession>
<accession>Q9JQK2</accession>
<accession>Q9K221</accession>
<dbReference type="EC" id="6.1.1.5" evidence="1"/>
<dbReference type="EMBL" id="AE001363">
    <property type="protein sequence ID" value="AAD18262.1"/>
    <property type="molecule type" value="Genomic_DNA"/>
</dbReference>
<dbReference type="EMBL" id="AE002161">
    <property type="protein sequence ID" value="AAF38477.1"/>
    <property type="molecule type" value="Genomic_DNA"/>
</dbReference>
<dbReference type="EMBL" id="BA000008">
    <property type="protein sequence ID" value="BAA98320.1"/>
    <property type="molecule type" value="Genomic_DNA"/>
</dbReference>
<dbReference type="EMBL" id="AE009440">
    <property type="protein sequence ID" value="AAP98043.1"/>
    <property type="molecule type" value="Genomic_DNA"/>
</dbReference>
<dbReference type="PIR" id="C81552">
    <property type="entry name" value="C81552"/>
</dbReference>
<dbReference type="PIR" id="E72118">
    <property type="entry name" value="E72118"/>
</dbReference>
<dbReference type="PIR" id="F86504">
    <property type="entry name" value="F86504"/>
</dbReference>
<dbReference type="RefSeq" id="NP_224317.1">
    <property type="nucleotide sequence ID" value="NC_000922.1"/>
</dbReference>
<dbReference type="RefSeq" id="WP_010882759.1">
    <property type="nucleotide sequence ID" value="NZ_LN847257.1"/>
</dbReference>
<dbReference type="SMR" id="Q9Z972"/>
<dbReference type="STRING" id="406984.CPK_ORF00619"/>
<dbReference type="GeneID" id="45050154"/>
<dbReference type="KEGG" id="cpa:CP_0665"/>
<dbReference type="KEGG" id="cpj:ileS"/>
<dbReference type="KEGG" id="cpn:CPn_0109"/>
<dbReference type="KEGG" id="cpt:CpB0110"/>
<dbReference type="PATRIC" id="fig|115713.3.peg.123"/>
<dbReference type="eggNOG" id="COG0060">
    <property type="taxonomic scope" value="Bacteria"/>
</dbReference>
<dbReference type="HOGENOM" id="CLU_001493_1_1_0"/>
<dbReference type="OrthoDB" id="9810365at2"/>
<dbReference type="Proteomes" id="UP000000583">
    <property type="component" value="Chromosome"/>
</dbReference>
<dbReference type="Proteomes" id="UP000000801">
    <property type="component" value="Chromosome"/>
</dbReference>
<dbReference type="GO" id="GO:0005737">
    <property type="term" value="C:cytoplasm"/>
    <property type="evidence" value="ECO:0007669"/>
    <property type="project" value="UniProtKB-SubCell"/>
</dbReference>
<dbReference type="GO" id="GO:0002161">
    <property type="term" value="F:aminoacyl-tRNA deacylase activity"/>
    <property type="evidence" value="ECO:0007669"/>
    <property type="project" value="InterPro"/>
</dbReference>
<dbReference type="GO" id="GO:0005524">
    <property type="term" value="F:ATP binding"/>
    <property type="evidence" value="ECO:0007669"/>
    <property type="project" value="UniProtKB-UniRule"/>
</dbReference>
<dbReference type="GO" id="GO:0004822">
    <property type="term" value="F:isoleucine-tRNA ligase activity"/>
    <property type="evidence" value="ECO:0007669"/>
    <property type="project" value="UniProtKB-UniRule"/>
</dbReference>
<dbReference type="GO" id="GO:0000049">
    <property type="term" value="F:tRNA binding"/>
    <property type="evidence" value="ECO:0007669"/>
    <property type="project" value="InterPro"/>
</dbReference>
<dbReference type="GO" id="GO:0008270">
    <property type="term" value="F:zinc ion binding"/>
    <property type="evidence" value="ECO:0007669"/>
    <property type="project" value="UniProtKB-UniRule"/>
</dbReference>
<dbReference type="GO" id="GO:0006428">
    <property type="term" value="P:isoleucyl-tRNA aminoacylation"/>
    <property type="evidence" value="ECO:0007669"/>
    <property type="project" value="UniProtKB-UniRule"/>
</dbReference>
<dbReference type="CDD" id="cd07961">
    <property type="entry name" value="Anticodon_Ia_Ile_ABEc"/>
    <property type="match status" value="1"/>
</dbReference>
<dbReference type="CDD" id="cd00818">
    <property type="entry name" value="IleRS_core"/>
    <property type="match status" value="1"/>
</dbReference>
<dbReference type="FunFam" id="3.40.50.620:FF:000241">
    <property type="entry name" value="Isoleucine--tRNA ligase"/>
    <property type="match status" value="1"/>
</dbReference>
<dbReference type="FunFam" id="3.40.50.620:FF:000133">
    <property type="entry name" value="Isoleucyl-tRNA synthetase, cytoplasmic"/>
    <property type="match status" value="1"/>
</dbReference>
<dbReference type="Gene3D" id="3.40.50.620">
    <property type="entry name" value="HUPs"/>
    <property type="match status" value="2"/>
</dbReference>
<dbReference type="Gene3D" id="1.10.730.10">
    <property type="entry name" value="Isoleucyl-tRNA Synthetase, Domain 1"/>
    <property type="match status" value="1"/>
</dbReference>
<dbReference type="HAMAP" id="MF_02003">
    <property type="entry name" value="Ile_tRNA_synth_type2"/>
    <property type="match status" value="1"/>
</dbReference>
<dbReference type="InterPro" id="IPR001412">
    <property type="entry name" value="aa-tRNA-synth_I_CS"/>
</dbReference>
<dbReference type="InterPro" id="IPR002300">
    <property type="entry name" value="aa-tRNA-synth_Ia"/>
</dbReference>
<dbReference type="InterPro" id="IPR033709">
    <property type="entry name" value="Anticodon_Ile_ABEc"/>
</dbReference>
<dbReference type="InterPro" id="IPR002301">
    <property type="entry name" value="Ile-tRNA-ligase"/>
</dbReference>
<dbReference type="InterPro" id="IPR023586">
    <property type="entry name" value="Ile-tRNA-ligase_type2"/>
</dbReference>
<dbReference type="InterPro" id="IPR013155">
    <property type="entry name" value="M/V/L/I-tRNA-synth_anticd-bd"/>
</dbReference>
<dbReference type="InterPro" id="IPR014729">
    <property type="entry name" value="Rossmann-like_a/b/a_fold"/>
</dbReference>
<dbReference type="InterPro" id="IPR009080">
    <property type="entry name" value="tRNAsynth_Ia_anticodon-bd"/>
</dbReference>
<dbReference type="InterPro" id="IPR009008">
    <property type="entry name" value="Val/Leu/Ile-tRNA-synth_edit"/>
</dbReference>
<dbReference type="NCBIfam" id="TIGR00392">
    <property type="entry name" value="ileS"/>
    <property type="match status" value="1"/>
</dbReference>
<dbReference type="PANTHER" id="PTHR42780:SF1">
    <property type="entry name" value="ISOLEUCINE--TRNA LIGASE, CYTOPLASMIC"/>
    <property type="match status" value="1"/>
</dbReference>
<dbReference type="PANTHER" id="PTHR42780">
    <property type="entry name" value="SOLEUCYL-TRNA SYNTHETASE"/>
    <property type="match status" value="1"/>
</dbReference>
<dbReference type="Pfam" id="PF08264">
    <property type="entry name" value="Anticodon_1"/>
    <property type="match status" value="1"/>
</dbReference>
<dbReference type="Pfam" id="PF19302">
    <property type="entry name" value="DUF5915"/>
    <property type="match status" value="1"/>
</dbReference>
<dbReference type="Pfam" id="PF00133">
    <property type="entry name" value="tRNA-synt_1"/>
    <property type="match status" value="1"/>
</dbReference>
<dbReference type="PRINTS" id="PR00984">
    <property type="entry name" value="TRNASYNTHILE"/>
</dbReference>
<dbReference type="SUPFAM" id="SSF47323">
    <property type="entry name" value="Anticodon-binding domain of a subclass of class I aminoacyl-tRNA synthetases"/>
    <property type="match status" value="1"/>
</dbReference>
<dbReference type="SUPFAM" id="SSF52374">
    <property type="entry name" value="Nucleotidylyl transferase"/>
    <property type="match status" value="1"/>
</dbReference>
<dbReference type="SUPFAM" id="SSF50677">
    <property type="entry name" value="ValRS/IleRS/LeuRS editing domain"/>
    <property type="match status" value="1"/>
</dbReference>
<dbReference type="PROSITE" id="PS00178">
    <property type="entry name" value="AA_TRNA_LIGASE_I"/>
    <property type="match status" value="1"/>
</dbReference>
<sequence length="1043" mass="120287">MTADEVGKNSFAKKEEQVLKFWKDNQIFEKSLQNRQGKTLYSFYDGPPFATGLPHYGHLLASTIKDVVGRYATMDGYYVPRRFGWDCHGVPVEYEVEKSLSLTAPGAIEDFGIASFNEECRKIVFRYVHEWEYYINRIGRWVDFSSTWKTMDASFMESVWWVFQSLYNQGLVYEGTKVVPFSTALGTPLSNFEASQNYKEVDDPSLVVRMPLQNDSASLLVWTTTPWTLPSNMAIAVGETLVYVRIQDKKSGEQWILSQGCVSRWFSNPEEFVILESFSGKDLVGRTYEPPFTFFQSKREEGAFRVIAASFVEESEGTGVVHMAPAFGEGDFLVCKENHVPLVCPVDAHGSFTEEIPQYQGQYIKHADKEIIKFLKKEGRIFYHGTVKHRYPFCWRTDTPLIYKAVNSWFVAVEKIKDKMLRANSSIHWVPEHIQEGRFGKWLEGARDWAISRNRYWGTPIPIWKSADGEILVVGSIRELEELTGTQITDIHRHFIDDLNIVKDGKPFHRIPYVFDCWFDSGAMPYAQNHYPFENQKETEEAFPADFIAEGLDQTRGWFYTLTVISAILFDRPAFRNAIVNGIILAEDGNKMSKRLNNYPSPKYVLDTYGADALRLYLLHSVVVKAEDLRFSDKGIEGVLKQILLPLTNVLSFFNTYAELYGFDPKSQDIEPAYTEIDQWILSNLYSVVGKVRESMSQYHLNFAVEPFVTFIDDLTNWYIRRCRRRFWEAEDTPDRRAAFSTLYEVLTVFCKVIAPFVPFLAEDIYQKLKLEKEPESVHLCDFPQVEMDKILPDLEKRMHDIREIVGLGHSLRKEHKLKVRQPLANFYVVGSKDRLSLLKTFEGLIAEELNVKNVIFYEEAPSFIYTTVKPNFRMLGKKVGSKMKEVQKALSELPNNAIDKLIQEETWVLTIDDREIALDGDDVVICRHTDPGYIARSSALFSVILDCQLREPLIVEGIARELVNKINTMRRNQQLHVSDRIALRIKTTEAVHRAFLDYENYICEETLIIAYDFTQDSDFQGENWDINGHATQIEITVSSIDS</sequence>
<organism>
    <name type="scientific">Chlamydia pneumoniae</name>
    <name type="common">Chlamydophila pneumoniae</name>
    <dbReference type="NCBI Taxonomy" id="83558"/>
    <lineage>
        <taxon>Bacteria</taxon>
        <taxon>Pseudomonadati</taxon>
        <taxon>Chlamydiota</taxon>
        <taxon>Chlamydiia</taxon>
        <taxon>Chlamydiales</taxon>
        <taxon>Chlamydiaceae</taxon>
        <taxon>Chlamydia/Chlamydophila group</taxon>
        <taxon>Chlamydia</taxon>
    </lineage>
</organism>
<name>SYI_CHLPN</name>
<reference key="1">
    <citation type="journal article" date="1999" name="Nat. Genet.">
        <title>Comparative genomes of Chlamydia pneumoniae and C. trachomatis.</title>
        <authorList>
            <person name="Kalman S."/>
            <person name="Mitchell W.P."/>
            <person name="Marathe R."/>
            <person name="Lammel C.J."/>
            <person name="Fan J."/>
            <person name="Hyman R.W."/>
            <person name="Olinger L."/>
            <person name="Grimwood J."/>
            <person name="Davis R.W."/>
            <person name="Stephens R.S."/>
        </authorList>
    </citation>
    <scope>NUCLEOTIDE SEQUENCE [LARGE SCALE GENOMIC DNA]</scope>
    <source>
        <strain>CWL029</strain>
    </source>
</reference>
<reference key="2">
    <citation type="journal article" date="2000" name="Nucleic Acids Res.">
        <title>Genome sequences of Chlamydia trachomatis MoPn and Chlamydia pneumoniae AR39.</title>
        <authorList>
            <person name="Read T.D."/>
            <person name="Brunham R.C."/>
            <person name="Shen C."/>
            <person name="Gill S.R."/>
            <person name="Heidelberg J.F."/>
            <person name="White O."/>
            <person name="Hickey E.K."/>
            <person name="Peterson J.D."/>
            <person name="Utterback T.R."/>
            <person name="Berry K.J."/>
            <person name="Bass S."/>
            <person name="Linher K.D."/>
            <person name="Weidman J.F."/>
            <person name="Khouri H.M."/>
            <person name="Craven B."/>
            <person name="Bowman C."/>
            <person name="Dodson R.J."/>
            <person name="Gwinn M.L."/>
            <person name="Nelson W.C."/>
            <person name="DeBoy R.T."/>
            <person name="Kolonay J.F."/>
            <person name="McClarty G."/>
            <person name="Salzberg S.L."/>
            <person name="Eisen J.A."/>
            <person name="Fraser C.M."/>
        </authorList>
    </citation>
    <scope>NUCLEOTIDE SEQUENCE [LARGE SCALE GENOMIC DNA]</scope>
    <source>
        <strain>AR39</strain>
    </source>
</reference>
<reference key="3">
    <citation type="journal article" date="2000" name="Nucleic Acids Res.">
        <title>Comparison of whole genome sequences of Chlamydia pneumoniae J138 from Japan and CWL029 from USA.</title>
        <authorList>
            <person name="Shirai M."/>
            <person name="Hirakawa H."/>
            <person name="Kimoto M."/>
            <person name="Tabuchi M."/>
            <person name="Kishi F."/>
            <person name="Ouchi K."/>
            <person name="Shiba T."/>
            <person name="Ishii K."/>
            <person name="Hattori M."/>
            <person name="Kuhara S."/>
            <person name="Nakazawa T."/>
        </authorList>
    </citation>
    <scope>NUCLEOTIDE SEQUENCE [LARGE SCALE GENOMIC DNA]</scope>
    <source>
        <strain>J138</strain>
    </source>
</reference>
<reference key="4">
    <citation type="submission" date="2002-05" db="EMBL/GenBank/DDBJ databases">
        <title>The genome sequence of Chlamydia pneumoniae TW183 and comparison with other Chlamydia strains based on whole genome sequence analysis.</title>
        <authorList>
            <person name="Geng M.M."/>
            <person name="Schuhmacher A."/>
            <person name="Muehldorfer I."/>
            <person name="Bensch K.W."/>
            <person name="Schaefer K.P."/>
            <person name="Schneider S."/>
            <person name="Pohl T."/>
            <person name="Essig A."/>
            <person name="Marre R."/>
            <person name="Melchers K."/>
        </authorList>
    </citation>
    <scope>NUCLEOTIDE SEQUENCE [LARGE SCALE GENOMIC DNA]</scope>
    <source>
        <strain>TW-183</strain>
    </source>
</reference>
<comment type="function">
    <text evidence="1">Catalyzes the attachment of isoleucine to tRNA(Ile). As IleRS can inadvertently accommodate and process structurally similar amino acids such as valine, to avoid such errors it has two additional distinct tRNA(Ile)-dependent editing activities. One activity is designated as 'pretransfer' editing and involves the hydrolysis of activated Val-AMP. The other activity is designated 'posttransfer' editing and involves deacylation of mischarged Val-tRNA(Ile).</text>
</comment>
<comment type="catalytic activity">
    <reaction evidence="1">
        <text>tRNA(Ile) + L-isoleucine + ATP = L-isoleucyl-tRNA(Ile) + AMP + diphosphate</text>
        <dbReference type="Rhea" id="RHEA:11060"/>
        <dbReference type="Rhea" id="RHEA-COMP:9666"/>
        <dbReference type="Rhea" id="RHEA-COMP:9695"/>
        <dbReference type="ChEBI" id="CHEBI:30616"/>
        <dbReference type="ChEBI" id="CHEBI:33019"/>
        <dbReference type="ChEBI" id="CHEBI:58045"/>
        <dbReference type="ChEBI" id="CHEBI:78442"/>
        <dbReference type="ChEBI" id="CHEBI:78528"/>
        <dbReference type="ChEBI" id="CHEBI:456215"/>
        <dbReference type="EC" id="6.1.1.5"/>
    </reaction>
</comment>
<comment type="cofactor">
    <cofactor evidence="1">
        <name>Zn(2+)</name>
        <dbReference type="ChEBI" id="CHEBI:29105"/>
    </cofactor>
</comment>
<comment type="subunit">
    <text evidence="1">Monomer.</text>
</comment>
<comment type="subcellular location">
    <subcellularLocation>
        <location evidence="1">Cytoplasm</location>
    </subcellularLocation>
</comment>
<comment type="domain">
    <text evidence="1">IleRS has two distinct active sites: one for aminoacylation and one for editing. The misactivated valine is translocated from the active site to the editing site, which sterically excludes the correctly activated isoleucine. The single editing site contains two valyl binding pockets, one specific for each substrate (Val-AMP or Val-tRNA(Ile)).</text>
</comment>
<comment type="similarity">
    <text evidence="1">Belongs to the class-I aminoacyl-tRNA synthetase family. IleS type 2 subfamily.</text>
</comment>
<keyword id="KW-0030">Aminoacyl-tRNA synthetase</keyword>
<keyword id="KW-0067">ATP-binding</keyword>
<keyword id="KW-0963">Cytoplasm</keyword>
<keyword id="KW-0436">Ligase</keyword>
<keyword id="KW-0479">Metal-binding</keyword>
<keyword id="KW-0547">Nucleotide-binding</keyword>
<keyword id="KW-0648">Protein biosynthesis</keyword>
<keyword id="KW-0862">Zinc</keyword>